<keyword id="KW-0067">ATP-binding</keyword>
<keyword id="KW-0093">Biotin biosynthesis</keyword>
<keyword id="KW-0436">Ligase</keyword>
<keyword id="KW-0460">Magnesium</keyword>
<keyword id="KW-0547">Nucleotide-binding</keyword>
<accession>A6QJR2</accession>
<feature type="chain" id="PRO_1000072718" description="6-carboxyhexanoate--CoA ligase">
    <location>
        <begin position="1"/>
        <end position="230"/>
    </location>
</feature>
<gene>
    <name evidence="1" type="primary">bioW</name>
    <name type="ordered locus">NWMN_2322</name>
</gene>
<sequence length="230" mass="26092">MYSIKMRSSNQDVHISGAETICEFDKIEQTVQRFYNKGFFHENGQPDFLNIKIQKIMEPIQQIKALQIIEDDKANLQHLTQECGVTEQALNQGMTYIKNETVYTGAIILSAISGKRLDSFGQRGIRATHFSFEDINNKGDLNERVTDALAIASCINAHPYVKGELCVSDDLTYTTGYFAAAKIGYHRLFDIKPVNTRYGGRIIFVDDCIDLNHYISFLESTPKQVVYETV</sequence>
<proteinExistence type="inferred from homology"/>
<evidence type="ECO:0000255" key="1">
    <source>
        <dbReference type="HAMAP-Rule" id="MF_00668"/>
    </source>
</evidence>
<dbReference type="EC" id="6.2.1.14" evidence="1"/>
<dbReference type="EMBL" id="AP009351">
    <property type="protein sequence ID" value="BAF68594.1"/>
    <property type="molecule type" value="Genomic_DNA"/>
</dbReference>
<dbReference type="RefSeq" id="WP_000286875.1">
    <property type="nucleotide sequence ID" value="NZ_JBBIAE010000004.1"/>
</dbReference>
<dbReference type="SMR" id="A6QJR2"/>
<dbReference type="KEGG" id="sae:NWMN_2322"/>
<dbReference type="HOGENOM" id="CLU_076858_0_0_9"/>
<dbReference type="UniPathway" id="UPA00999">
    <property type="reaction ID" value="UER00351"/>
</dbReference>
<dbReference type="Proteomes" id="UP000006386">
    <property type="component" value="Chromosome"/>
</dbReference>
<dbReference type="GO" id="GO:0042410">
    <property type="term" value="F:6-carboxyhexanoate-CoA ligase activity"/>
    <property type="evidence" value="ECO:0007669"/>
    <property type="project" value="UniProtKB-UniRule"/>
</dbReference>
<dbReference type="GO" id="GO:0005524">
    <property type="term" value="F:ATP binding"/>
    <property type="evidence" value="ECO:0007669"/>
    <property type="project" value="UniProtKB-KW"/>
</dbReference>
<dbReference type="GO" id="GO:0000287">
    <property type="term" value="F:magnesium ion binding"/>
    <property type="evidence" value="ECO:0007669"/>
    <property type="project" value="UniProtKB-UniRule"/>
</dbReference>
<dbReference type="GO" id="GO:0009102">
    <property type="term" value="P:biotin biosynthetic process"/>
    <property type="evidence" value="ECO:0007669"/>
    <property type="project" value="UniProtKB-UniRule"/>
</dbReference>
<dbReference type="HAMAP" id="MF_00668">
    <property type="entry name" value="BioW"/>
    <property type="match status" value="1"/>
</dbReference>
<dbReference type="InterPro" id="IPR005499">
    <property type="entry name" value="BioW"/>
</dbReference>
<dbReference type="NCBIfam" id="NF002360">
    <property type="entry name" value="PRK01322.1"/>
    <property type="match status" value="1"/>
</dbReference>
<dbReference type="Pfam" id="PF03744">
    <property type="entry name" value="BioW"/>
    <property type="match status" value="1"/>
</dbReference>
<protein>
    <recommendedName>
        <fullName evidence="1">6-carboxyhexanoate--CoA ligase</fullName>
        <ecNumber evidence="1">6.2.1.14</ecNumber>
    </recommendedName>
    <alternativeName>
        <fullName evidence="1">Pimeloyl-CoA synthase</fullName>
    </alternativeName>
</protein>
<reference key="1">
    <citation type="journal article" date="2008" name="J. Bacteriol.">
        <title>Genome sequence of Staphylococcus aureus strain Newman and comparative analysis of staphylococcal genomes: polymorphism and evolution of two major pathogenicity islands.</title>
        <authorList>
            <person name="Baba T."/>
            <person name="Bae T."/>
            <person name="Schneewind O."/>
            <person name="Takeuchi F."/>
            <person name="Hiramatsu K."/>
        </authorList>
    </citation>
    <scope>NUCLEOTIDE SEQUENCE [LARGE SCALE GENOMIC DNA]</scope>
    <source>
        <strain>Newman</strain>
    </source>
</reference>
<comment type="function">
    <text evidence="1">Catalyzes the transformation of pimelate into pimeloyl-CoA with concomitant hydrolysis of ATP to AMP.</text>
</comment>
<comment type="catalytic activity">
    <reaction evidence="1">
        <text>heptanedioate + ATP + CoA = 6-carboxyhexanoyl-CoA + AMP + diphosphate</text>
        <dbReference type="Rhea" id="RHEA:14781"/>
        <dbReference type="ChEBI" id="CHEBI:30616"/>
        <dbReference type="ChEBI" id="CHEBI:33019"/>
        <dbReference type="ChEBI" id="CHEBI:36165"/>
        <dbReference type="ChEBI" id="CHEBI:57287"/>
        <dbReference type="ChEBI" id="CHEBI:57360"/>
        <dbReference type="ChEBI" id="CHEBI:456215"/>
        <dbReference type="EC" id="6.2.1.14"/>
    </reaction>
</comment>
<comment type="cofactor">
    <cofactor evidence="1">
        <name>Mg(2+)</name>
        <dbReference type="ChEBI" id="CHEBI:18420"/>
    </cofactor>
</comment>
<comment type="pathway">
    <text evidence="1">Metabolic intermediate metabolism; pimeloyl-CoA biosynthesis; pimeloyl-CoA from pimelate: step 1/1.</text>
</comment>
<comment type="subunit">
    <text evidence="1">Homodimer.</text>
</comment>
<comment type="similarity">
    <text evidence="1">Belongs to the BioW family.</text>
</comment>
<name>BIOW_STAAE</name>
<organism>
    <name type="scientific">Staphylococcus aureus (strain Newman)</name>
    <dbReference type="NCBI Taxonomy" id="426430"/>
    <lineage>
        <taxon>Bacteria</taxon>
        <taxon>Bacillati</taxon>
        <taxon>Bacillota</taxon>
        <taxon>Bacilli</taxon>
        <taxon>Bacillales</taxon>
        <taxon>Staphylococcaceae</taxon>
        <taxon>Staphylococcus</taxon>
    </lineage>
</organism>